<gene>
    <name evidence="1" type="primary">chlN</name>
    <name type="ordered locus">Tery_1530</name>
</gene>
<organism>
    <name type="scientific">Trichodesmium erythraeum (strain IMS101)</name>
    <dbReference type="NCBI Taxonomy" id="203124"/>
    <lineage>
        <taxon>Bacteria</taxon>
        <taxon>Bacillati</taxon>
        <taxon>Cyanobacteriota</taxon>
        <taxon>Cyanophyceae</taxon>
        <taxon>Oscillatoriophycideae</taxon>
        <taxon>Oscillatoriales</taxon>
        <taxon>Microcoleaceae</taxon>
        <taxon>Trichodesmium</taxon>
    </lineage>
</organism>
<reference key="1">
    <citation type="journal article" date="2015" name="Proc. Natl. Acad. Sci. U.S.A.">
        <title>Trichodesmium genome maintains abundant, widespread noncoding DNA in situ, despite oligotrophic lifestyle.</title>
        <authorList>
            <person name="Walworth N."/>
            <person name="Pfreundt U."/>
            <person name="Nelson W.C."/>
            <person name="Mincer T."/>
            <person name="Heidelberg J.F."/>
            <person name="Fu F."/>
            <person name="Waterbury J.B."/>
            <person name="Glavina del Rio T."/>
            <person name="Goodwin L."/>
            <person name="Kyrpides N.C."/>
            <person name="Land M.L."/>
            <person name="Woyke T."/>
            <person name="Hutchins D.A."/>
            <person name="Hess W.R."/>
            <person name="Webb E.A."/>
        </authorList>
    </citation>
    <scope>NUCLEOTIDE SEQUENCE [LARGE SCALE GENOMIC DNA]</scope>
    <source>
        <strain>IMS101</strain>
    </source>
</reference>
<name>CHLN_TRIEI</name>
<proteinExistence type="inferred from homology"/>
<sequence length="465" mass="52697">MSNTIQPEALTFECETGNYHTFCPISCVSWLYQKIEDSFFLVIGTKTCGYFLQNAMGVMIFAEPRYAMAELEEGDISAKLNDYNELKRLCLQIKRDRNPSVIVWIGTCTTEIIKMDLEGLAPKLESEIGIPIVVARANGLDYAFTQGEDTVLAAMAARCPKQVLEVEKEAKNGIQKLLSFGRKKEEVAAEKSEYVNHPPLILFGSLPDPVVTQLTLELKKQGIKVSGWLPAKHYTELPVIEEGYYVAGVNPFLSRTATTLMRRRKCKLIGAPFPIGPDGSKAWIEKICSVFGIEPQGLVEREEQIWNNLEDYIQLIRGKSVFFMGDNLLEISLARFLIRCGMTCPEIGIPYMDKRYQKAELEMLEKTCQEMGVRLPKIIEKPDNYNQIQRIYELQPDLVITGMAHANPLEARGINTKWSVEFTFAQIHGFTNARDILELVTRPLRRNNALKDLGWDKLVKEEAKV</sequence>
<keyword id="KW-0004">4Fe-4S</keyword>
<keyword id="KW-0067">ATP-binding</keyword>
<keyword id="KW-0149">Chlorophyll biosynthesis</keyword>
<keyword id="KW-0408">Iron</keyword>
<keyword id="KW-0411">Iron-sulfur</keyword>
<keyword id="KW-0479">Metal-binding</keyword>
<keyword id="KW-0547">Nucleotide-binding</keyword>
<keyword id="KW-0560">Oxidoreductase</keyword>
<keyword id="KW-0602">Photosynthesis</keyword>
<feature type="chain" id="PRO_1000048398" description="Light-independent protochlorophyllide reductase subunit N">
    <location>
        <begin position="1"/>
        <end position="465"/>
    </location>
</feature>
<feature type="binding site" evidence="1">
    <location>
        <position position="23"/>
    </location>
    <ligand>
        <name>[4Fe-4S] cluster</name>
        <dbReference type="ChEBI" id="CHEBI:49883"/>
        <note>ligand shared with heterodimeric partner</note>
    </ligand>
</feature>
<feature type="binding site" evidence="1">
    <location>
        <position position="48"/>
    </location>
    <ligand>
        <name>[4Fe-4S] cluster</name>
        <dbReference type="ChEBI" id="CHEBI:49883"/>
        <note>ligand shared with heterodimeric partner</note>
    </ligand>
</feature>
<feature type="binding site" evidence="1">
    <location>
        <position position="108"/>
    </location>
    <ligand>
        <name>[4Fe-4S] cluster</name>
        <dbReference type="ChEBI" id="CHEBI:49883"/>
        <note>ligand shared with heterodimeric partner</note>
    </ligand>
</feature>
<evidence type="ECO:0000255" key="1">
    <source>
        <dbReference type="HAMAP-Rule" id="MF_00352"/>
    </source>
</evidence>
<dbReference type="EC" id="1.3.7.7" evidence="1"/>
<dbReference type="EMBL" id="CP000393">
    <property type="protein sequence ID" value="ABG50811.1"/>
    <property type="molecule type" value="Genomic_DNA"/>
</dbReference>
<dbReference type="RefSeq" id="WP_011611187.1">
    <property type="nucleotide sequence ID" value="NC_008312.1"/>
</dbReference>
<dbReference type="SMR" id="Q115L3"/>
<dbReference type="STRING" id="203124.Tery_1530"/>
<dbReference type="KEGG" id="ter:Tery_1530"/>
<dbReference type="eggNOG" id="COG2710">
    <property type="taxonomic scope" value="Bacteria"/>
</dbReference>
<dbReference type="HOGENOM" id="CLU_037170_0_0_3"/>
<dbReference type="OrthoDB" id="5714774at2"/>
<dbReference type="UniPathway" id="UPA00670"/>
<dbReference type="GO" id="GO:0051539">
    <property type="term" value="F:4 iron, 4 sulfur cluster binding"/>
    <property type="evidence" value="ECO:0007669"/>
    <property type="project" value="UniProtKB-UniRule"/>
</dbReference>
<dbReference type="GO" id="GO:0005524">
    <property type="term" value="F:ATP binding"/>
    <property type="evidence" value="ECO:0007669"/>
    <property type="project" value="UniProtKB-UniRule"/>
</dbReference>
<dbReference type="GO" id="GO:0046872">
    <property type="term" value="F:metal ion binding"/>
    <property type="evidence" value="ECO:0007669"/>
    <property type="project" value="UniProtKB-KW"/>
</dbReference>
<dbReference type="GO" id="GO:0016730">
    <property type="term" value="F:oxidoreductase activity, acting on iron-sulfur proteins as donors"/>
    <property type="evidence" value="ECO:0007669"/>
    <property type="project" value="InterPro"/>
</dbReference>
<dbReference type="GO" id="GO:0016636">
    <property type="term" value="F:oxidoreductase activity, acting on the CH-CH group of donors, iron-sulfur protein as acceptor"/>
    <property type="evidence" value="ECO:0007669"/>
    <property type="project" value="UniProtKB-UniRule"/>
</dbReference>
<dbReference type="GO" id="GO:0036068">
    <property type="term" value="P:light-independent chlorophyll biosynthetic process"/>
    <property type="evidence" value="ECO:0007669"/>
    <property type="project" value="UniProtKB-UniRule"/>
</dbReference>
<dbReference type="GO" id="GO:0019685">
    <property type="term" value="P:photosynthesis, dark reaction"/>
    <property type="evidence" value="ECO:0007669"/>
    <property type="project" value="InterPro"/>
</dbReference>
<dbReference type="CDD" id="cd01979">
    <property type="entry name" value="Pchlide_reductase_N"/>
    <property type="match status" value="1"/>
</dbReference>
<dbReference type="Gene3D" id="3.40.50.1980">
    <property type="entry name" value="Nitrogenase molybdenum iron protein domain"/>
    <property type="match status" value="3"/>
</dbReference>
<dbReference type="HAMAP" id="MF_00352">
    <property type="entry name" value="ChlN_BchN"/>
    <property type="match status" value="1"/>
</dbReference>
<dbReference type="InterPro" id="IPR050293">
    <property type="entry name" value="LIPOR_BchN/ChlN"/>
</dbReference>
<dbReference type="InterPro" id="IPR000510">
    <property type="entry name" value="Nase/OxRdtase_comp1"/>
</dbReference>
<dbReference type="InterPro" id="IPR005970">
    <property type="entry name" value="Protochl_reductN"/>
</dbReference>
<dbReference type="NCBIfam" id="TIGR01279">
    <property type="entry name" value="DPOR_bchN"/>
    <property type="match status" value="1"/>
</dbReference>
<dbReference type="NCBIfam" id="NF002768">
    <property type="entry name" value="PRK02842.1"/>
    <property type="match status" value="1"/>
</dbReference>
<dbReference type="PANTHER" id="PTHR39429">
    <property type="entry name" value="LIGHT-INDEPENDENT PROTOCHLOROPHYLLIDE REDUCTASE SUBUNIT N"/>
    <property type="match status" value="1"/>
</dbReference>
<dbReference type="PANTHER" id="PTHR39429:SF3">
    <property type="entry name" value="LIGHT-INDEPENDENT PROTOCHLOROPHYLLIDE REDUCTASE SUBUNIT N"/>
    <property type="match status" value="1"/>
</dbReference>
<dbReference type="Pfam" id="PF00148">
    <property type="entry name" value="Oxidored_nitro"/>
    <property type="match status" value="1"/>
</dbReference>
<dbReference type="PIRSF" id="PIRSF000162">
    <property type="entry name" value="P_chlorophyll_rd"/>
    <property type="match status" value="1"/>
</dbReference>
<dbReference type="SUPFAM" id="SSF53807">
    <property type="entry name" value="Helical backbone' metal receptor"/>
    <property type="match status" value="1"/>
</dbReference>
<accession>Q115L3</accession>
<protein>
    <recommendedName>
        <fullName evidence="1">Light-independent protochlorophyllide reductase subunit N</fullName>
        <shortName evidence="1">DPOR subunit N</shortName>
        <shortName evidence="1">LI-POR subunit N</shortName>
        <ecNumber evidence="1">1.3.7.7</ecNumber>
    </recommendedName>
</protein>
<comment type="function">
    <text evidence="1">Component of the dark-operative protochlorophyllide reductase (DPOR) that uses Mg-ATP and reduced ferredoxin to reduce ring D of protochlorophyllide (Pchlide) to form chlorophyllide a (Chlide). This reaction is light-independent. The NB-protein (ChlN-ChlB) is the catalytic component of the complex.</text>
</comment>
<comment type="catalytic activity">
    <reaction evidence="1">
        <text>chlorophyllide a + oxidized 2[4Fe-4S]-[ferredoxin] + 2 ADP + 2 phosphate = protochlorophyllide a + reduced 2[4Fe-4S]-[ferredoxin] + 2 ATP + 2 H2O</text>
        <dbReference type="Rhea" id="RHEA:28202"/>
        <dbReference type="Rhea" id="RHEA-COMP:10002"/>
        <dbReference type="Rhea" id="RHEA-COMP:10004"/>
        <dbReference type="ChEBI" id="CHEBI:15377"/>
        <dbReference type="ChEBI" id="CHEBI:30616"/>
        <dbReference type="ChEBI" id="CHEBI:33722"/>
        <dbReference type="ChEBI" id="CHEBI:33723"/>
        <dbReference type="ChEBI" id="CHEBI:43474"/>
        <dbReference type="ChEBI" id="CHEBI:83348"/>
        <dbReference type="ChEBI" id="CHEBI:83350"/>
        <dbReference type="ChEBI" id="CHEBI:456216"/>
        <dbReference type="EC" id="1.3.7.7"/>
    </reaction>
</comment>
<comment type="cofactor">
    <cofactor evidence="1">
        <name>[4Fe-4S] cluster</name>
        <dbReference type="ChEBI" id="CHEBI:49883"/>
    </cofactor>
    <text evidence="1">Binds 1 [4Fe-4S] cluster per heterodimer. The cluster is bound at the heterodimer interface by residues from both subunits.</text>
</comment>
<comment type="pathway">
    <text evidence="1">Porphyrin-containing compound metabolism; chlorophyll biosynthesis (light-independent).</text>
</comment>
<comment type="subunit">
    <text evidence="1">Protochlorophyllide reductase is composed of three subunits; ChlL, ChlN and ChlB. Forms a heterotetramer of two ChlB and two ChlN subunits.</text>
</comment>
<comment type="similarity">
    <text evidence="1">Belongs to the BchN/ChlN family.</text>
</comment>